<sequence>MVSTSSFKTTKSEEIFTAAQKLMPGGVSSPVRAFKSVGGQPIVFDHVEGAYIWDVDNNQYIDYVGTWGPAICGHAHPDVISALHKALDKGTSFGAPCMQENILAEMVIDAVPSIEMVRFVNSGTEACMSVLRLMRAYTNREKIIKFEGCYHGHADMFLVKAGSGVATLGLPDSPGVPKTTTSNTLTAPYNDLEAVKALFENNKDEIAGLILEPVVGNAGFIPPDAGFLEGLRELTKEYGALLVFDEVMTGFRIAYGGAQEKFGVTPDLTTLGKVIGGGLPVGAYGGRKEIMSLVAPSGPMYQAGTLSGNPLAMTAGIKTLELLQKPGTYDYLDRITKKLINGLLTLAKEAGHEVYGGSISGMFGLFFTGEAVHNYEDAKKSDTAKFGRFHRGMLERGIYLAPSQFEAGFTSLAHSDEDVEKTLQAAKEVFATL</sequence>
<accession>B7KA18</accession>
<protein>
    <recommendedName>
        <fullName evidence="1">Glutamate-1-semialdehyde 2,1-aminomutase</fullName>
        <shortName evidence="1">GSA</shortName>
        <ecNumber evidence="1">5.4.3.8</ecNumber>
    </recommendedName>
    <alternativeName>
        <fullName evidence="1">Glutamate-1-semialdehyde aminotransferase</fullName>
        <shortName evidence="1">GSA-AT</shortName>
    </alternativeName>
</protein>
<dbReference type="EC" id="5.4.3.8" evidence="1"/>
<dbReference type="EMBL" id="CP001291">
    <property type="protein sequence ID" value="ACK71374.1"/>
    <property type="molecule type" value="Genomic_DNA"/>
</dbReference>
<dbReference type="RefSeq" id="WP_015954972.1">
    <property type="nucleotide sequence ID" value="NC_011729.1"/>
</dbReference>
<dbReference type="SMR" id="B7KA18"/>
<dbReference type="STRING" id="65393.PCC7424_2971"/>
<dbReference type="KEGG" id="cyc:PCC7424_2971"/>
<dbReference type="eggNOG" id="COG0001">
    <property type="taxonomic scope" value="Bacteria"/>
</dbReference>
<dbReference type="HOGENOM" id="CLU_016922_1_5_3"/>
<dbReference type="OrthoDB" id="9807885at2"/>
<dbReference type="UniPathway" id="UPA00251">
    <property type="reaction ID" value="UER00317"/>
</dbReference>
<dbReference type="UniPathway" id="UPA00668"/>
<dbReference type="Proteomes" id="UP000002384">
    <property type="component" value="Chromosome"/>
</dbReference>
<dbReference type="GO" id="GO:0005737">
    <property type="term" value="C:cytoplasm"/>
    <property type="evidence" value="ECO:0007669"/>
    <property type="project" value="UniProtKB-SubCell"/>
</dbReference>
<dbReference type="GO" id="GO:0042286">
    <property type="term" value="F:glutamate-1-semialdehyde 2,1-aminomutase activity"/>
    <property type="evidence" value="ECO:0007669"/>
    <property type="project" value="UniProtKB-UniRule"/>
</dbReference>
<dbReference type="GO" id="GO:0030170">
    <property type="term" value="F:pyridoxal phosphate binding"/>
    <property type="evidence" value="ECO:0007669"/>
    <property type="project" value="InterPro"/>
</dbReference>
<dbReference type="GO" id="GO:0008483">
    <property type="term" value="F:transaminase activity"/>
    <property type="evidence" value="ECO:0007669"/>
    <property type="project" value="InterPro"/>
</dbReference>
<dbReference type="GO" id="GO:0015995">
    <property type="term" value="P:chlorophyll biosynthetic process"/>
    <property type="evidence" value="ECO:0007669"/>
    <property type="project" value="UniProtKB-UniRule"/>
</dbReference>
<dbReference type="GO" id="GO:0006782">
    <property type="term" value="P:protoporphyrinogen IX biosynthetic process"/>
    <property type="evidence" value="ECO:0007669"/>
    <property type="project" value="UniProtKB-UniRule"/>
</dbReference>
<dbReference type="CDD" id="cd00610">
    <property type="entry name" value="OAT_like"/>
    <property type="match status" value="1"/>
</dbReference>
<dbReference type="FunFam" id="3.40.640.10:FF:000021">
    <property type="entry name" value="Glutamate-1-semialdehyde 2,1-aminomutase"/>
    <property type="match status" value="1"/>
</dbReference>
<dbReference type="FunFam" id="3.90.1150.10:FF:000012">
    <property type="entry name" value="Glutamate-1-semialdehyde 2,1-aminomutase"/>
    <property type="match status" value="1"/>
</dbReference>
<dbReference type="Gene3D" id="3.90.1150.10">
    <property type="entry name" value="Aspartate Aminotransferase, domain 1"/>
    <property type="match status" value="1"/>
</dbReference>
<dbReference type="Gene3D" id="3.40.640.10">
    <property type="entry name" value="Type I PLP-dependent aspartate aminotransferase-like (Major domain)"/>
    <property type="match status" value="1"/>
</dbReference>
<dbReference type="HAMAP" id="MF_00375">
    <property type="entry name" value="HemL_aminotrans_3"/>
    <property type="match status" value="1"/>
</dbReference>
<dbReference type="InterPro" id="IPR004639">
    <property type="entry name" value="4pyrrol_synth_GluAld_NH2Trfase"/>
</dbReference>
<dbReference type="InterPro" id="IPR005814">
    <property type="entry name" value="Aminotrans_3"/>
</dbReference>
<dbReference type="InterPro" id="IPR049704">
    <property type="entry name" value="Aminotrans_3_PPA_site"/>
</dbReference>
<dbReference type="InterPro" id="IPR015424">
    <property type="entry name" value="PyrdxlP-dep_Trfase"/>
</dbReference>
<dbReference type="InterPro" id="IPR015421">
    <property type="entry name" value="PyrdxlP-dep_Trfase_major"/>
</dbReference>
<dbReference type="InterPro" id="IPR015422">
    <property type="entry name" value="PyrdxlP-dep_Trfase_small"/>
</dbReference>
<dbReference type="NCBIfam" id="TIGR00713">
    <property type="entry name" value="hemL"/>
    <property type="match status" value="1"/>
</dbReference>
<dbReference type="NCBIfam" id="NF000818">
    <property type="entry name" value="PRK00062.1"/>
    <property type="match status" value="1"/>
</dbReference>
<dbReference type="PANTHER" id="PTHR43713">
    <property type="entry name" value="GLUTAMATE-1-SEMIALDEHYDE 2,1-AMINOMUTASE"/>
    <property type="match status" value="1"/>
</dbReference>
<dbReference type="PANTHER" id="PTHR43713:SF3">
    <property type="entry name" value="GLUTAMATE-1-SEMIALDEHYDE 2,1-AMINOMUTASE 1, CHLOROPLASTIC-RELATED"/>
    <property type="match status" value="1"/>
</dbReference>
<dbReference type="Pfam" id="PF00202">
    <property type="entry name" value="Aminotran_3"/>
    <property type="match status" value="1"/>
</dbReference>
<dbReference type="SUPFAM" id="SSF53383">
    <property type="entry name" value="PLP-dependent transferases"/>
    <property type="match status" value="1"/>
</dbReference>
<dbReference type="PROSITE" id="PS00600">
    <property type="entry name" value="AA_TRANSFER_CLASS_3"/>
    <property type="match status" value="1"/>
</dbReference>
<reference key="1">
    <citation type="journal article" date="2011" name="MBio">
        <title>Novel metabolic attributes of the genus Cyanothece, comprising a group of unicellular nitrogen-fixing Cyanobacteria.</title>
        <authorList>
            <person name="Bandyopadhyay A."/>
            <person name="Elvitigala T."/>
            <person name="Welsh E."/>
            <person name="Stockel J."/>
            <person name="Liberton M."/>
            <person name="Min H."/>
            <person name="Sherman L.A."/>
            <person name="Pakrasi H.B."/>
        </authorList>
    </citation>
    <scope>NUCLEOTIDE SEQUENCE [LARGE SCALE GENOMIC DNA]</scope>
    <source>
        <strain>PCC 7424</strain>
    </source>
</reference>
<proteinExistence type="inferred from homology"/>
<organism>
    <name type="scientific">Gloeothece citriformis (strain PCC 7424)</name>
    <name type="common">Cyanothece sp. (strain PCC 7424)</name>
    <dbReference type="NCBI Taxonomy" id="65393"/>
    <lineage>
        <taxon>Bacteria</taxon>
        <taxon>Bacillati</taxon>
        <taxon>Cyanobacteriota</taxon>
        <taxon>Cyanophyceae</taxon>
        <taxon>Oscillatoriophycideae</taxon>
        <taxon>Chroococcales</taxon>
        <taxon>Aphanothecaceae</taxon>
        <taxon>Gloeothece</taxon>
        <taxon>Gloeothece citriformis</taxon>
    </lineage>
</organism>
<evidence type="ECO:0000255" key="1">
    <source>
        <dbReference type="HAMAP-Rule" id="MF_00375"/>
    </source>
</evidence>
<gene>
    <name evidence="1" type="primary">hemL</name>
    <name type="ordered locus">PCC7424_2971</name>
</gene>
<comment type="catalytic activity">
    <reaction evidence="1">
        <text>(S)-4-amino-5-oxopentanoate = 5-aminolevulinate</text>
        <dbReference type="Rhea" id="RHEA:14265"/>
        <dbReference type="ChEBI" id="CHEBI:57501"/>
        <dbReference type="ChEBI" id="CHEBI:356416"/>
        <dbReference type="EC" id="5.4.3.8"/>
    </reaction>
</comment>
<comment type="cofactor">
    <cofactor evidence="1">
        <name>pyridoxal 5'-phosphate</name>
        <dbReference type="ChEBI" id="CHEBI:597326"/>
    </cofactor>
</comment>
<comment type="pathway">
    <text evidence="1">Porphyrin-containing compound metabolism; protoporphyrin-IX biosynthesis; 5-aminolevulinate from L-glutamyl-tRNA(Glu): step 2/2.</text>
</comment>
<comment type="pathway">
    <text evidence="1">Porphyrin-containing compound metabolism; chlorophyll biosynthesis.</text>
</comment>
<comment type="subunit">
    <text evidence="1">Homodimer.</text>
</comment>
<comment type="subcellular location">
    <subcellularLocation>
        <location evidence="1">Cytoplasm</location>
    </subcellularLocation>
</comment>
<comment type="similarity">
    <text evidence="1">Belongs to the class-III pyridoxal-phosphate-dependent aminotransferase family. HemL subfamily.</text>
</comment>
<keyword id="KW-0149">Chlorophyll biosynthesis</keyword>
<keyword id="KW-0963">Cytoplasm</keyword>
<keyword id="KW-0413">Isomerase</keyword>
<keyword id="KW-0627">Porphyrin biosynthesis</keyword>
<keyword id="KW-0663">Pyridoxal phosphate</keyword>
<keyword id="KW-1185">Reference proteome</keyword>
<feature type="chain" id="PRO_1000121875" description="Glutamate-1-semialdehyde 2,1-aminomutase">
    <location>
        <begin position="1"/>
        <end position="433"/>
    </location>
</feature>
<feature type="modified residue" description="N6-(pyridoxal phosphate)lysine" evidence="1">
    <location>
        <position position="273"/>
    </location>
</feature>
<name>GSA_GLOC7</name>